<gene>
    <name type="primary">Cldn3</name>
</gene>
<proteinExistence type="evidence at protein level"/>
<protein>
    <recommendedName>
        <fullName>Claudin-3</fullName>
    </recommendedName>
    <alternativeName>
        <fullName>Rat ventral prostate.1 protein</fullName>
        <shortName>RVP1</shortName>
    </alternativeName>
</protein>
<evidence type="ECO:0000250" key="1"/>
<evidence type="ECO:0000250" key="2">
    <source>
        <dbReference type="UniProtKB" id="O15551"/>
    </source>
</evidence>
<evidence type="ECO:0000250" key="3">
    <source>
        <dbReference type="UniProtKB" id="Q9Z0G9"/>
    </source>
</evidence>
<evidence type="ECO:0000255" key="4"/>
<evidence type="ECO:0000305" key="5"/>
<evidence type="ECO:0007744" key="6">
    <source>
    </source>
</evidence>
<accession>Q63400</accession>
<comment type="function">
    <text evidence="3">Plays a major role in tight junction-specific obliteration of the intercellular space, through calcium-independent cell-adhesion activity.</text>
</comment>
<comment type="subunit">
    <text evidence="2 3">Can form homo- and heteropolymers with other CLDN. Homopolymers interact with CLDN1 and CLDN2 homopolymers. Interacts in cis (within the same plasma membrane) with CLDN19. Directly interacts with TJP1/ZO-1, TJP2/ZO-2 and TJP3/ZO-3 (By similarity).</text>
</comment>
<comment type="subcellular location">
    <subcellularLocation>
        <location evidence="3">Cell junction</location>
        <location evidence="3">Tight junction</location>
    </subcellularLocation>
    <subcellularLocation>
        <location evidence="3">Cell membrane</location>
        <topology evidence="3">Multi-pass membrane protein</topology>
    </subcellularLocation>
</comment>
<comment type="similarity">
    <text evidence="5">Belongs to the claudin family.</text>
</comment>
<sequence length="219" mass="23315">MSMGLEITGTSLAVLGWLCTIVCCALPMWRVSAFIGSSIITAQITWEGLWMNCVVQSTGQMQCKMYDSLLALPQDLQAARALIVVSILLAAFGLLVALVGAQCTNCVQDETAKAKITIVAGVLFLLAAVLTLVPVSWSANTIIRDFYNPLVPEAQKREMGTGLYVGWAAAALQLLGGALLCCSCPPREKYAPTKILYSAPRSTGPGTGTGTAYDRKDYV</sequence>
<organism>
    <name type="scientific">Rattus norvegicus</name>
    <name type="common">Rat</name>
    <dbReference type="NCBI Taxonomy" id="10116"/>
    <lineage>
        <taxon>Eukaryota</taxon>
        <taxon>Metazoa</taxon>
        <taxon>Chordata</taxon>
        <taxon>Craniata</taxon>
        <taxon>Vertebrata</taxon>
        <taxon>Euteleostomi</taxon>
        <taxon>Mammalia</taxon>
        <taxon>Eutheria</taxon>
        <taxon>Euarchontoglires</taxon>
        <taxon>Glires</taxon>
        <taxon>Rodentia</taxon>
        <taxon>Myomorpha</taxon>
        <taxon>Muroidea</taxon>
        <taxon>Muridae</taxon>
        <taxon>Murinae</taxon>
        <taxon>Rattus</taxon>
    </lineage>
</organism>
<keyword id="KW-0965">Cell junction</keyword>
<keyword id="KW-1003">Cell membrane</keyword>
<keyword id="KW-0472">Membrane</keyword>
<keyword id="KW-0597">Phosphoprotein</keyword>
<keyword id="KW-1185">Reference proteome</keyword>
<keyword id="KW-0796">Tight junction</keyword>
<keyword id="KW-0812">Transmembrane</keyword>
<keyword id="KW-1133">Transmembrane helix</keyword>
<dbReference type="EMBL" id="M74067">
    <property type="protein sequence ID" value="AAA41760.1"/>
    <property type="molecule type" value="mRNA"/>
</dbReference>
<dbReference type="EMBL" id="AJ011656">
    <property type="protein sequence ID" value="CAA09727.1"/>
    <property type="molecule type" value="Genomic_DNA"/>
</dbReference>
<dbReference type="EMBL" id="BC062411">
    <property type="protein sequence ID" value="AAH62411.1"/>
    <property type="molecule type" value="mRNA"/>
</dbReference>
<dbReference type="PIR" id="A39484">
    <property type="entry name" value="A39484"/>
</dbReference>
<dbReference type="RefSeq" id="NP_113888.2">
    <property type="nucleotide sequence ID" value="NM_031700.2"/>
</dbReference>
<dbReference type="SMR" id="Q63400"/>
<dbReference type="FunCoup" id="Q63400">
    <property type="interactions" value="387"/>
</dbReference>
<dbReference type="STRING" id="10116.ENSRNOP00000064411"/>
<dbReference type="iPTMnet" id="Q63400"/>
<dbReference type="PhosphoSitePlus" id="Q63400"/>
<dbReference type="PaxDb" id="10116-ENSRNOP00000064411"/>
<dbReference type="Ensembl" id="ENSRNOT00000075280.3">
    <property type="protein sequence ID" value="ENSRNOP00000064411.1"/>
    <property type="gene ID" value="ENSRNOG00000046007.3"/>
</dbReference>
<dbReference type="GeneID" id="65130"/>
<dbReference type="KEGG" id="rno:65130"/>
<dbReference type="AGR" id="RGD:68425"/>
<dbReference type="CTD" id="1365"/>
<dbReference type="RGD" id="68425">
    <property type="gene designation" value="Cldn3"/>
</dbReference>
<dbReference type="eggNOG" id="ENOG502QRZ8">
    <property type="taxonomic scope" value="Eukaryota"/>
</dbReference>
<dbReference type="GeneTree" id="ENSGT00940000162095"/>
<dbReference type="HOGENOM" id="CLU_076370_1_2_1"/>
<dbReference type="InParanoid" id="Q63400"/>
<dbReference type="OMA" id="WLCSIIC"/>
<dbReference type="OrthoDB" id="50189at9989"/>
<dbReference type="PhylomeDB" id="Q63400"/>
<dbReference type="PRO" id="PR:Q63400"/>
<dbReference type="Proteomes" id="UP000002494">
    <property type="component" value="Chromosome 12"/>
</dbReference>
<dbReference type="Bgee" id="ENSRNOG00000046007">
    <property type="expression patterns" value="Expressed in jejunum and 14 other cell types or tissues"/>
</dbReference>
<dbReference type="GO" id="GO:0043296">
    <property type="term" value="C:apical junction complex"/>
    <property type="evidence" value="ECO:0000266"/>
    <property type="project" value="RGD"/>
</dbReference>
<dbReference type="GO" id="GO:0016327">
    <property type="term" value="C:apicolateral plasma membrane"/>
    <property type="evidence" value="ECO:0000266"/>
    <property type="project" value="RGD"/>
</dbReference>
<dbReference type="GO" id="GO:0005923">
    <property type="term" value="C:bicellular tight junction"/>
    <property type="evidence" value="ECO:0000314"/>
    <property type="project" value="RGD"/>
</dbReference>
<dbReference type="GO" id="GO:0005911">
    <property type="term" value="C:cell-cell junction"/>
    <property type="evidence" value="ECO:0000266"/>
    <property type="project" value="RGD"/>
</dbReference>
<dbReference type="GO" id="GO:0016328">
    <property type="term" value="C:lateral plasma membrane"/>
    <property type="evidence" value="ECO:0000314"/>
    <property type="project" value="RGD"/>
</dbReference>
<dbReference type="GO" id="GO:0005886">
    <property type="term" value="C:plasma membrane"/>
    <property type="evidence" value="ECO:0000266"/>
    <property type="project" value="RGD"/>
</dbReference>
<dbReference type="GO" id="GO:0032991">
    <property type="term" value="C:protein-containing complex"/>
    <property type="evidence" value="ECO:0000266"/>
    <property type="project" value="RGD"/>
</dbReference>
<dbReference type="GO" id="GO:0070160">
    <property type="term" value="C:tight junction"/>
    <property type="evidence" value="ECO:0000266"/>
    <property type="project" value="RGD"/>
</dbReference>
<dbReference type="GO" id="GO:0098632">
    <property type="term" value="F:cell-cell adhesion mediator activity"/>
    <property type="evidence" value="ECO:0000266"/>
    <property type="project" value="RGD"/>
</dbReference>
<dbReference type="GO" id="GO:0042802">
    <property type="term" value="F:identical protein binding"/>
    <property type="evidence" value="ECO:0000250"/>
    <property type="project" value="UniProtKB"/>
</dbReference>
<dbReference type="GO" id="GO:0005198">
    <property type="term" value="F:structural molecule activity"/>
    <property type="evidence" value="ECO:0000266"/>
    <property type="project" value="RGD"/>
</dbReference>
<dbReference type="GO" id="GO:0030036">
    <property type="term" value="P:actin cytoskeleton organization"/>
    <property type="evidence" value="ECO:0000266"/>
    <property type="project" value="RGD"/>
</dbReference>
<dbReference type="GO" id="GO:0070830">
    <property type="term" value="P:bicellular tight junction assembly"/>
    <property type="evidence" value="ECO:0000266"/>
    <property type="project" value="RGD"/>
</dbReference>
<dbReference type="GO" id="GO:0016338">
    <property type="term" value="P:calcium-independent cell-cell adhesion via plasma membrane cell-adhesion molecules"/>
    <property type="evidence" value="ECO:0000250"/>
    <property type="project" value="UniProtKB"/>
</dbReference>
<dbReference type="GO" id="GO:0007155">
    <property type="term" value="P:cell adhesion"/>
    <property type="evidence" value="ECO:0000318"/>
    <property type="project" value="GO_Central"/>
</dbReference>
<dbReference type="GO" id="GO:0034329">
    <property type="term" value="P:cell junction assembly"/>
    <property type="evidence" value="ECO:0000266"/>
    <property type="project" value="RGD"/>
</dbReference>
<dbReference type="GO" id="GO:0034331">
    <property type="term" value="P:cell junction maintenance"/>
    <property type="evidence" value="ECO:0000266"/>
    <property type="project" value="RGD"/>
</dbReference>
<dbReference type="GO" id="GO:0045217">
    <property type="term" value="P:cell-cell junction maintenance"/>
    <property type="evidence" value="ECO:0000266"/>
    <property type="project" value="RGD"/>
</dbReference>
<dbReference type="GO" id="GO:0003382">
    <property type="term" value="P:epithelial cell morphogenesis"/>
    <property type="evidence" value="ECO:0000250"/>
    <property type="project" value="UniProtKB"/>
</dbReference>
<dbReference type="GO" id="GO:0014045">
    <property type="term" value="P:establishment of endothelial blood-brain barrier"/>
    <property type="evidence" value="ECO:0000266"/>
    <property type="project" value="RGD"/>
</dbReference>
<dbReference type="GO" id="GO:0030336">
    <property type="term" value="P:negative regulation of cell migration"/>
    <property type="evidence" value="ECO:0000266"/>
    <property type="project" value="RGD"/>
</dbReference>
<dbReference type="GO" id="GO:0008285">
    <property type="term" value="P:negative regulation of cell population proliferation"/>
    <property type="evidence" value="ECO:0000266"/>
    <property type="project" value="RGD"/>
</dbReference>
<dbReference type="GO" id="GO:0010629">
    <property type="term" value="P:negative regulation of gene expression"/>
    <property type="evidence" value="ECO:0000266"/>
    <property type="project" value="RGD"/>
</dbReference>
<dbReference type="GO" id="GO:2000186">
    <property type="term" value="P:negative regulation of phosphate transmembrane transport"/>
    <property type="evidence" value="ECO:0000266"/>
    <property type="project" value="RGD"/>
</dbReference>
<dbReference type="GO" id="GO:0030335">
    <property type="term" value="P:positive regulation of cell migration"/>
    <property type="evidence" value="ECO:0000266"/>
    <property type="project" value="RGD"/>
</dbReference>
<dbReference type="GO" id="GO:0010628">
    <property type="term" value="P:positive regulation of gene expression"/>
    <property type="evidence" value="ECO:0000266"/>
    <property type="project" value="RGD"/>
</dbReference>
<dbReference type="GO" id="GO:0090303">
    <property type="term" value="P:positive regulation of wound healing"/>
    <property type="evidence" value="ECO:0000266"/>
    <property type="project" value="RGD"/>
</dbReference>
<dbReference type="GO" id="GO:0022604">
    <property type="term" value="P:regulation of cell morphogenesis"/>
    <property type="evidence" value="ECO:0000266"/>
    <property type="project" value="RGD"/>
</dbReference>
<dbReference type="GO" id="GO:0090559">
    <property type="term" value="P:regulation of membrane permeability"/>
    <property type="evidence" value="ECO:0000266"/>
    <property type="project" value="RGD"/>
</dbReference>
<dbReference type="GO" id="GO:0150111">
    <property type="term" value="P:regulation of transepithelial transport"/>
    <property type="evidence" value="ECO:0000266"/>
    <property type="project" value="RGD"/>
</dbReference>
<dbReference type="GO" id="GO:0045471">
    <property type="term" value="P:response to ethanol"/>
    <property type="evidence" value="ECO:0000270"/>
    <property type="project" value="RGD"/>
</dbReference>
<dbReference type="GO" id="GO:0140459">
    <property type="term" value="P:response to Gram-positive bacterium"/>
    <property type="evidence" value="ECO:0000270"/>
    <property type="project" value="RGD"/>
</dbReference>
<dbReference type="GO" id="GO:0001666">
    <property type="term" value="P:response to hypoxia"/>
    <property type="evidence" value="ECO:0000266"/>
    <property type="project" value="RGD"/>
</dbReference>
<dbReference type="GO" id="GO:0003406">
    <property type="term" value="P:retinal pigment epithelium development"/>
    <property type="evidence" value="ECO:0000266"/>
    <property type="project" value="RGD"/>
</dbReference>
<dbReference type="FunFam" id="1.20.140.150:FF:000001">
    <property type="entry name" value="Claudin"/>
    <property type="match status" value="1"/>
</dbReference>
<dbReference type="Gene3D" id="1.20.140.150">
    <property type="match status" value="1"/>
</dbReference>
<dbReference type="InterPro" id="IPR006187">
    <property type="entry name" value="Claudin"/>
</dbReference>
<dbReference type="InterPro" id="IPR003549">
    <property type="entry name" value="Claudin3"/>
</dbReference>
<dbReference type="InterPro" id="IPR017974">
    <property type="entry name" value="Claudin_CS"/>
</dbReference>
<dbReference type="InterPro" id="IPR004031">
    <property type="entry name" value="PMP22/EMP/MP20/Claudin"/>
</dbReference>
<dbReference type="PANTHER" id="PTHR12002">
    <property type="entry name" value="CLAUDIN"/>
    <property type="match status" value="1"/>
</dbReference>
<dbReference type="Pfam" id="PF00822">
    <property type="entry name" value="PMP22_Claudin"/>
    <property type="match status" value="1"/>
</dbReference>
<dbReference type="PRINTS" id="PR01077">
    <property type="entry name" value="CLAUDIN"/>
</dbReference>
<dbReference type="PRINTS" id="PR01378">
    <property type="entry name" value="CLAUDIN3"/>
</dbReference>
<dbReference type="PROSITE" id="PS01346">
    <property type="entry name" value="CLAUDIN"/>
    <property type="match status" value="1"/>
</dbReference>
<name>CLD3_RAT</name>
<feature type="chain" id="PRO_0000144740" description="Claudin-3">
    <location>
        <begin position="1"/>
        <end position="219"/>
    </location>
</feature>
<feature type="topological domain" description="Cytoplasmic" evidence="4">
    <location>
        <begin position="1"/>
        <end position="8"/>
    </location>
</feature>
<feature type="transmembrane region" description="Helical" evidence="4">
    <location>
        <begin position="9"/>
        <end position="29"/>
    </location>
</feature>
<feature type="topological domain" description="Extracellular" evidence="4">
    <location>
        <begin position="30"/>
        <end position="80"/>
    </location>
</feature>
<feature type="transmembrane region" description="Helical" evidence="4">
    <location>
        <begin position="81"/>
        <end position="101"/>
    </location>
</feature>
<feature type="topological domain" description="Cytoplasmic" evidence="4">
    <location>
        <begin position="102"/>
        <end position="115"/>
    </location>
</feature>
<feature type="transmembrane region" description="Helical" evidence="4">
    <location>
        <begin position="116"/>
        <end position="136"/>
    </location>
</feature>
<feature type="topological domain" description="Extracellular" evidence="4">
    <location>
        <begin position="137"/>
        <end position="161"/>
    </location>
</feature>
<feature type="transmembrane region" description="Helical" evidence="4">
    <location>
        <begin position="162"/>
        <end position="182"/>
    </location>
</feature>
<feature type="topological domain" description="Cytoplasmic" evidence="4">
    <location>
        <begin position="183"/>
        <end position="219"/>
    </location>
</feature>
<feature type="region of interest" description="Interactions with TJP1, TJP2 and TJP3" evidence="1">
    <location>
        <begin position="218"/>
        <end position="219"/>
    </location>
</feature>
<feature type="modified residue" description="Phosphotyrosine" evidence="6">
    <location>
        <position position="197"/>
    </location>
</feature>
<feature type="modified residue" description="Phosphoserine" evidence="6">
    <location>
        <position position="198"/>
    </location>
</feature>
<feature type="sequence conflict" description="In Ref. 1; AAA41760." evidence="5" ref="1">
    <original>G</original>
    <variation>S</variation>
    <location>
        <position position="4"/>
    </location>
</feature>
<feature type="sequence conflict" description="In Ref. 1; AAA41760." evidence="5" ref="1">
    <location>
        <position position="55"/>
    </location>
</feature>
<feature type="sequence conflict" description="In Ref. 1." evidence="5" ref="1">
    <original>DYV</original>
    <variation>TTSERPGARTPHHHHYQPSMYPTRPACSLASETTPPSRRLQTPRSLLARLEEDRQPGVPFSPVAT</variation>
    <location>
        <begin position="217"/>
        <end position="219"/>
    </location>
</feature>
<reference key="1">
    <citation type="journal article" date="1991" name="Mol. Endocrinol.">
        <title>Isolation and characterization of transcripts induced by androgen withdrawal and apoptotic cell death in the rat ventral prostate.</title>
        <authorList>
            <person name="Briehl M.M."/>
            <person name="Miesfeld R.L."/>
        </authorList>
    </citation>
    <scope>NUCLEOTIDE SEQUENCE [MRNA]</scope>
</reference>
<reference key="2">
    <citation type="submission" date="1998-09" db="EMBL/GenBank/DDBJ databases">
        <authorList>
            <person name="Keen T.J."/>
            <person name="Inglehearn C.F."/>
        </authorList>
    </citation>
    <scope>NUCLEOTIDE SEQUENCE [GENOMIC DNA]</scope>
</reference>
<reference key="3">
    <citation type="journal article" date="2004" name="Genome Res.">
        <title>The status, quality, and expansion of the NIH full-length cDNA project: the Mammalian Gene Collection (MGC).</title>
        <authorList>
            <consortium name="The MGC Project Team"/>
        </authorList>
    </citation>
    <scope>NUCLEOTIDE SEQUENCE [LARGE SCALE MRNA]</scope>
    <source>
        <tissue>Prostate</tissue>
    </source>
</reference>
<reference key="4">
    <citation type="journal article" date="2012" name="Nat. Commun.">
        <title>Quantitative maps of protein phosphorylation sites across 14 different rat organs and tissues.</title>
        <authorList>
            <person name="Lundby A."/>
            <person name="Secher A."/>
            <person name="Lage K."/>
            <person name="Nordsborg N.B."/>
            <person name="Dmytriyev A."/>
            <person name="Lundby C."/>
            <person name="Olsen J.V."/>
        </authorList>
    </citation>
    <scope>PHOSPHORYLATION [LARGE SCALE ANALYSIS] AT TYR-197 AND SER-198</scope>
    <scope>IDENTIFICATION BY MASS SPECTROMETRY [LARGE SCALE ANALYSIS]</scope>
</reference>